<comment type="function">
    <text evidence="1">Accelerates the degradation of transcripts by removing pyrophosphate from the 5'-end of triphosphorylated RNA, leading to a more labile monophosphorylated state that can stimulate subsequent ribonuclease cleavage.</text>
</comment>
<comment type="cofactor">
    <cofactor evidence="1">
        <name>a divalent metal cation</name>
        <dbReference type="ChEBI" id="CHEBI:60240"/>
    </cofactor>
</comment>
<comment type="similarity">
    <text evidence="1">Belongs to the Nudix hydrolase family. RppH subfamily.</text>
</comment>
<evidence type="ECO:0000255" key="1">
    <source>
        <dbReference type="HAMAP-Rule" id="MF_00298"/>
    </source>
</evidence>
<proteinExistence type="inferred from homology"/>
<sequence length="155" mass="18492">MLHKKYRPNVAAIIMSPDYPNTCEVFIAERIDIEGAWQFPQGGIDEGETPLEALHRELLEEIGTNEIEILAQYPRWIAYDFPSNMEHKFYAFDGQKQRYFLVRLKHANNIDLNKHTPEFRAYQFIHLKDLLKKIVPFKRQVYRQVIAYFKRDGYL</sequence>
<protein>
    <recommendedName>
        <fullName evidence="1">RNA pyrophosphohydrolase</fullName>
        <ecNumber evidence="1">3.6.1.-</ecNumber>
    </recommendedName>
    <alternativeName>
        <fullName evidence="1">(Di)nucleoside polyphosphate hydrolase</fullName>
    </alternativeName>
</protein>
<organism>
    <name type="scientific">Helicobacter pylori (strain G27)</name>
    <dbReference type="NCBI Taxonomy" id="563041"/>
    <lineage>
        <taxon>Bacteria</taxon>
        <taxon>Pseudomonadati</taxon>
        <taxon>Campylobacterota</taxon>
        <taxon>Epsilonproteobacteria</taxon>
        <taxon>Campylobacterales</taxon>
        <taxon>Helicobacteraceae</taxon>
        <taxon>Helicobacter</taxon>
    </lineage>
</organism>
<dbReference type="EC" id="3.6.1.-" evidence="1"/>
<dbReference type="EMBL" id="CP001173">
    <property type="protein sequence ID" value="ACI27922.1"/>
    <property type="molecule type" value="Genomic_DNA"/>
</dbReference>
<dbReference type="RefSeq" id="WP_000902584.1">
    <property type="nucleotide sequence ID" value="NC_011333.1"/>
</dbReference>
<dbReference type="SMR" id="B5Z8M3"/>
<dbReference type="KEGG" id="hpg:HPG27_1172"/>
<dbReference type="HOGENOM" id="CLU_087195_3_0_7"/>
<dbReference type="Proteomes" id="UP000001735">
    <property type="component" value="Chromosome"/>
</dbReference>
<dbReference type="GO" id="GO:0005737">
    <property type="term" value="C:cytoplasm"/>
    <property type="evidence" value="ECO:0007669"/>
    <property type="project" value="TreeGrafter"/>
</dbReference>
<dbReference type="GO" id="GO:0034353">
    <property type="term" value="F:mRNA 5'-diphosphatase activity"/>
    <property type="evidence" value="ECO:0007669"/>
    <property type="project" value="TreeGrafter"/>
</dbReference>
<dbReference type="GO" id="GO:0006402">
    <property type="term" value="P:mRNA catabolic process"/>
    <property type="evidence" value="ECO:0007669"/>
    <property type="project" value="TreeGrafter"/>
</dbReference>
<dbReference type="CDD" id="cd03671">
    <property type="entry name" value="NUDIX_Ap4A_hydrolase_plant_like"/>
    <property type="match status" value="1"/>
</dbReference>
<dbReference type="FunFam" id="3.90.79.10:FF:000084">
    <property type="entry name" value="RNA pyrophosphohydrolase"/>
    <property type="match status" value="1"/>
</dbReference>
<dbReference type="Gene3D" id="3.90.79.10">
    <property type="entry name" value="Nucleoside Triphosphate Pyrophosphohydrolase"/>
    <property type="match status" value="1"/>
</dbReference>
<dbReference type="HAMAP" id="MF_00298">
    <property type="entry name" value="Nudix_RppH"/>
    <property type="match status" value="1"/>
</dbReference>
<dbReference type="InterPro" id="IPR020476">
    <property type="entry name" value="Nudix_hydrolase"/>
</dbReference>
<dbReference type="InterPro" id="IPR015797">
    <property type="entry name" value="NUDIX_hydrolase-like_dom_sf"/>
</dbReference>
<dbReference type="InterPro" id="IPR020084">
    <property type="entry name" value="NUDIX_hydrolase_CS"/>
</dbReference>
<dbReference type="InterPro" id="IPR000086">
    <property type="entry name" value="NUDIX_hydrolase_dom"/>
</dbReference>
<dbReference type="InterPro" id="IPR022927">
    <property type="entry name" value="RppH"/>
</dbReference>
<dbReference type="NCBIfam" id="NF001936">
    <property type="entry name" value="PRK00714.1-3"/>
    <property type="match status" value="1"/>
</dbReference>
<dbReference type="NCBIfam" id="NF001938">
    <property type="entry name" value="PRK00714.1-5"/>
    <property type="match status" value="1"/>
</dbReference>
<dbReference type="PANTHER" id="PTHR23114">
    <property type="entry name" value="M7GPPPN-MRNA HYDROLASE"/>
    <property type="match status" value="1"/>
</dbReference>
<dbReference type="PANTHER" id="PTHR23114:SF17">
    <property type="entry name" value="M7GPPPN-MRNA HYDROLASE"/>
    <property type="match status" value="1"/>
</dbReference>
<dbReference type="Pfam" id="PF00293">
    <property type="entry name" value="NUDIX"/>
    <property type="match status" value="1"/>
</dbReference>
<dbReference type="PRINTS" id="PR00502">
    <property type="entry name" value="NUDIXFAMILY"/>
</dbReference>
<dbReference type="SUPFAM" id="SSF55811">
    <property type="entry name" value="Nudix"/>
    <property type="match status" value="1"/>
</dbReference>
<dbReference type="PROSITE" id="PS51462">
    <property type="entry name" value="NUDIX"/>
    <property type="match status" value="1"/>
</dbReference>
<dbReference type="PROSITE" id="PS00893">
    <property type="entry name" value="NUDIX_BOX"/>
    <property type="match status" value="1"/>
</dbReference>
<gene>
    <name evidence="1" type="primary">rppH</name>
    <name evidence="1" type="synonym">nudH</name>
    <name type="ordered locus">HPG27_1172</name>
</gene>
<keyword id="KW-0378">Hydrolase</keyword>
<keyword id="KW-1185">Reference proteome</keyword>
<name>RPPH_HELPG</name>
<reference key="1">
    <citation type="journal article" date="2009" name="J. Bacteriol.">
        <title>The complete genome sequence of Helicobacter pylori strain G27.</title>
        <authorList>
            <person name="Baltrus D.A."/>
            <person name="Amieva M.R."/>
            <person name="Covacci A."/>
            <person name="Lowe T.M."/>
            <person name="Merrell D.S."/>
            <person name="Ottemann K.M."/>
            <person name="Stein M."/>
            <person name="Salama N.R."/>
            <person name="Guillemin K."/>
        </authorList>
    </citation>
    <scope>NUCLEOTIDE SEQUENCE [LARGE SCALE GENOMIC DNA]</scope>
    <source>
        <strain>G27</strain>
    </source>
</reference>
<feature type="chain" id="PRO_1000115281" description="RNA pyrophosphohydrolase">
    <location>
        <begin position="1"/>
        <end position="155"/>
    </location>
</feature>
<feature type="domain" description="Nudix hydrolase" evidence="1">
    <location>
        <begin position="5"/>
        <end position="147"/>
    </location>
</feature>
<feature type="short sequence motif" description="Nudix box">
    <location>
        <begin position="42"/>
        <end position="63"/>
    </location>
</feature>
<accession>B5Z8M3</accession>